<organism>
    <name type="scientific">Bradyrhizobium diazoefficiens (strain JCM 10833 / BCRC 13528 / IAM 13628 / NBRC 14792 / USDA 110)</name>
    <dbReference type="NCBI Taxonomy" id="224911"/>
    <lineage>
        <taxon>Bacteria</taxon>
        <taxon>Pseudomonadati</taxon>
        <taxon>Pseudomonadota</taxon>
        <taxon>Alphaproteobacteria</taxon>
        <taxon>Hyphomicrobiales</taxon>
        <taxon>Nitrobacteraceae</taxon>
        <taxon>Bradyrhizobium</taxon>
    </lineage>
</organism>
<accession>Q89U83</accession>
<protein>
    <recommendedName>
        <fullName evidence="1">Probable transcriptional regulatory protein blr1534</fullName>
    </recommendedName>
</protein>
<comment type="subcellular location">
    <subcellularLocation>
        <location evidence="1">Cytoplasm</location>
    </subcellularLocation>
</comment>
<comment type="similarity">
    <text evidence="1">Belongs to the TACO1 family.</text>
</comment>
<dbReference type="EMBL" id="BA000040">
    <property type="protein sequence ID" value="BAC46799.1"/>
    <property type="molecule type" value="Genomic_DNA"/>
</dbReference>
<dbReference type="RefSeq" id="NP_768174.1">
    <property type="nucleotide sequence ID" value="NC_004463.1"/>
</dbReference>
<dbReference type="RefSeq" id="WP_011084350.1">
    <property type="nucleotide sequence ID" value="NC_004463.1"/>
</dbReference>
<dbReference type="SMR" id="Q89U83"/>
<dbReference type="FunCoup" id="Q89U83">
    <property type="interactions" value="692"/>
</dbReference>
<dbReference type="STRING" id="224911.AAV28_04610"/>
<dbReference type="EnsemblBacteria" id="BAC46799">
    <property type="protein sequence ID" value="BAC46799"/>
    <property type="gene ID" value="BAC46799"/>
</dbReference>
<dbReference type="GeneID" id="46488808"/>
<dbReference type="KEGG" id="bja:blr1534"/>
<dbReference type="PATRIC" id="fig|224911.44.peg.969"/>
<dbReference type="eggNOG" id="COG0217">
    <property type="taxonomic scope" value="Bacteria"/>
</dbReference>
<dbReference type="HOGENOM" id="CLU_062974_2_2_5"/>
<dbReference type="InParanoid" id="Q89U83"/>
<dbReference type="OrthoDB" id="9781053at2"/>
<dbReference type="PhylomeDB" id="Q89U83"/>
<dbReference type="Proteomes" id="UP000002526">
    <property type="component" value="Chromosome"/>
</dbReference>
<dbReference type="GO" id="GO:0005829">
    <property type="term" value="C:cytosol"/>
    <property type="evidence" value="ECO:0000318"/>
    <property type="project" value="GO_Central"/>
</dbReference>
<dbReference type="GO" id="GO:0003677">
    <property type="term" value="F:DNA binding"/>
    <property type="evidence" value="ECO:0007669"/>
    <property type="project" value="UniProtKB-UniRule"/>
</dbReference>
<dbReference type="GO" id="GO:0006355">
    <property type="term" value="P:regulation of DNA-templated transcription"/>
    <property type="evidence" value="ECO:0007669"/>
    <property type="project" value="UniProtKB-UniRule"/>
</dbReference>
<dbReference type="FunFam" id="1.10.10.200:FF:000002">
    <property type="entry name" value="Probable transcriptional regulatory protein CLM62_37755"/>
    <property type="match status" value="1"/>
</dbReference>
<dbReference type="Gene3D" id="1.10.10.200">
    <property type="match status" value="1"/>
</dbReference>
<dbReference type="Gene3D" id="3.30.70.980">
    <property type="match status" value="2"/>
</dbReference>
<dbReference type="HAMAP" id="MF_00693">
    <property type="entry name" value="Transcrip_reg_TACO1"/>
    <property type="match status" value="1"/>
</dbReference>
<dbReference type="InterPro" id="IPR017856">
    <property type="entry name" value="Integrase-like_N"/>
</dbReference>
<dbReference type="InterPro" id="IPR048300">
    <property type="entry name" value="TACO1_YebC-like_2nd/3rd_dom"/>
</dbReference>
<dbReference type="InterPro" id="IPR049083">
    <property type="entry name" value="TACO1_YebC_N"/>
</dbReference>
<dbReference type="InterPro" id="IPR002876">
    <property type="entry name" value="Transcrip_reg_TACO1-like"/>
</dbReference>
<dbReference type="InterPro" id="IPR026564">
    <property type="entry name" value="Transcrip_reg_TACO1-like_dom3"/>
</dbReference>
<dbReference type="InterPro" id="IPR029072">
    <property type="entry name" value="YebC-like"/>
</dbReference>
<dbReference type="NCBIfam" id="NF001030">
    <property type="entry name" value="PRK00110.1"/>
    <property type="match status" value="1"/>
</dbReference>
<dbReference type="NCBIfam" id="NF009044">
    <property type="entry name" value="PRK12378.1"/>
    <property type="match status" value="1"/>
</dbReference>
<dbReference type="NCBIfam" id="TIGR01033">
    <property type="entry name" value="YebC/PmpR family DNA-binding transcriptional regulator"/>
    <property type="match status" value="1"/>
</dbReference>
<dbReference type="PANTHER" id="PTHR12532:SF6">
    <property type="entry name" value="TRANSCRIPTIONAL REGULATORY PROTEIN YEBC-RELATED"/>
    <property type="match status" value="1"/>
</dbReference>
<dbReference type="PANTHER" id="PTHR12532">
    <property type="entry name" value="TRANSLATIONAL ACTIVATOR OF CYTOCHROME C OXIDASE 1"/>
    <property type="match status" value="1"/>
</dbReference>
<dbReference type="Pfam" id="PF20772">
    <property type="entry name" value="TACO1_YebC_N"/>
    <property type="match status" value="1"/>
</dbReference>
<dbReference type="Pfam" id="PF01709">
    <property type="entry name" value="Transcrip_reg"/>
    <property type="match status" value="1"/>
</dbReference>
<dbReference type="SUPFAM" id="SSF75625">
    <property type="entry name" value="YebC-like"/>
    <property type="match status" value="1"/>
</dbReference>
<gene>
    <name type="ordered locus">blr1534</name>
</gene>
<sequence length="248" mass="26796">MAGHSQFKNIMHRKGRQDAQKSKLFGKLAREITVAAKLGTPDPAMNPRLRAAVIAARAENMPKDNIERAIKKALGSDGENYDEIRYEGYGPGGVAVIVEALTDNRNRAASDIRSFFTKSGGNLGETGSVSFMFDRTGIIEYDRSVASDDAVLDAAIEAGADDVVSGEGGHEIYASTEGYRDVAKALEAKFGEPRKAALIWKPQNTVAVDDETGEKLLKLMDLLNEHDDVQNVYANFEVSDALVAKMGG</sequence>
<proteinExistence type="inferred from homology"/>
<reference key="1">
    <citation type="journal article" date="2002" name="DNA Res.">
        <title>Complete genomic sequence of nitrogen-fixing symbiotic bacterium Bradyrhizobium japonicum USDA110.</title>
        <authorList>
            <person name="Kaneko T."/>
            <person name="Nakamura Y."/>
            <person name="Sato S."/>
            <person name="Minamisawa K."/>
            <person name="Uchiumi T."/>
            <person name="Sasamoto S."/>
            <person name="Watanabe A."/>
            <person name="Idesawa K."/>
            <person name="Iriguchi M."/>
            <person name="Kawashima K."/>
            <person name="Kohara M."/>
            <person name="Matsumoto M."/>
            <person name="Shimpo S."/>
            <person name="Tsuruoka H."/>
            <person name="Wada T."/>
            <person name="Yamada M."/>
            <person name="Tabata S."/>
        </authorList>
    </citation>
    <scope>NUCLEOTIDE SEQUENCE [LARGE SCALE GENOMIC DNA]</scope>
    <source>
        <strain>JCM 10833 / BCRC 13528 / IAM 13628 / NBRC 14792 / USDA 110</strain>
    </source>
</reference>
<name>Y1534_BRADU</name>
<feature type="chain" id="PRO_0000175774" description="Probable transcriptional regulatory protein blr1534">
    <location>
        <begin position="1"/>
        <end position="248"/>
    </location>
</feature>
<feature type="region of interest" description="Disordered" evidence="2">
    <location>
        <begin position="1"/>
        <end position="21"/>
    </location>
</feature>
<keyword id="KW-0963">Cytoplasm</keyword>
<keyword id="KW-0238">DNA-binding</keyword>
<keyword id="KW-1185">Reference proteome</keyword>
<keyword id="KW-0804">Transcription</keyword>
<keyword id="KW-0805">Transcription regulation</keyword>
<evidence type="ECO:0000255" key="1">
    <source>
        <dbReference type="HAMAP-Rule" id="MF_00693"/>
    </source>
</evidence>
<evidence type="ECO:0000256" key="2">
    <source>
        <dbReference type="SAM" id="MobiDB-lite"/>
    </source>
</evidence>